<protein>
    <recommendedName>
        <fullName>Probable nucleolar complex protein 14</fullName>
    </recommendedName>
</protein>
<keyword id="KW-0539">Nucleus</keyword>
<keyword id="KW-1185">Reference proteome</keyword>
<keyword id="KW-0690">Ribosome biogenesis</keyword>
<keyword id="KW-0698">rRNA processing</keyword>
<sequence>MGGSQLKNLKAALKANGLTGQTNVKKSSKKKGKSPREFDREERQKTIERIREQFNPFDVKTNRNKKVGVMRESAAKLAVGKPGITKQAGEDQRKMFYEAKKSSKNRSGGVLDKRFGEKDKNLTSEEIMLERFTKERQRQSSTKRSLFNLDDSDGGEDENVYGEKLTHYGKSLSLEDDFDEGDLGLQHSDSEDFRLKQAGKRNMADQYGDEGLGDDALQEPARKKTKAEVMQEVIAKSKFYKHERQKAQEKLVQDIEGLDDDFESIMSELRTLPKTKPSQTEISTSTDIAPDYDIKVKELVLEKRAAPADRTKTDEEIKKEYEDKQKELEQKRLDRMNGIFNIEDQKDAGVEDLGEEFWEDSDSEEGEYGEYIKAIPDSDDDVDFEKDNNDDNEYDATSNGRPSARVIPSVPCPQIHDDLLNFLKSYPIEEHPSLVKRIVKTYQPKLAEGNKEKLGKFTAVLLRHILFLAEEDYSVNVKEIASLQNELVSILKTLSEKFTIPLSEDCRNIISDIQTRFKESQFYGLSPSDLVFFSVVGMLFSTSDHYHLVITPCLLLIAEFLEQIRFNSLQKLIFGSILVRIAIQYQRISKRYIPELTYFLQTSLRSLIPSTKGETLENKEKQEDNLSIVGSDINWSKVAPSLELHSLFSEDLEKQESIKLSVLVNNLESIDWCITNIWKDLTAFPEIINPFKDILNVAAEVYPGTSKPKQLVEKIEKLLKFQERLPLTLQQHKPLAIPSNTPKFEENFNPDKKSYDPDKTRSELNKMKAQLKKERKFTMKEIRKDTRFEARQGIEEKKKEYADYHSKMARIVNQISTEEGAEKNKYEREKKLRNTKR</sequence>
<dbReference type="EMBL" id="CR382123">
    <property type="protein sequence ID" value="CAH01781.1"/>
    <property type="molecule type" value="Genomic_DNA"/>
</dbReference>
<dbReference type="RefSeq" id="XP_452930.1">
    <property type="nucleotide sequence ID" value="XM_452930.1"/>
</dbReference>
<dbReference type="SMR" id="Q6CT09"/>
<dbReference type="FunCoup" id="Q6CT09">
    <property type="interactions" value="1222"/>
</dbReference>
<dbReference type="STRING" id="284590.Q6CT09"/>
<dbReference type="PaxDb" id="284590-Q6CT09"/>
<dbReference type="KEGG" id="kla:KLLA0_C16335g"/>
<dbReference type="eggNOG" id="KOG2147">
    <property type="taxonomic scope" value="Eukaryota"/>
</dbReference>
<dbReference type="HOGENOM" id="CLU_008874_0_0_1"/>
<dbReference type="InParanoid" id="Q6CT09"/>
<dbReference type="OMA" id="KSCWPSL"/>
<dbReference type="Proteomes" id="UP000000598">
    <property type="component" value="Chromosome C"/>
</dbReference>
<dbReference type="GO" id="GO:0030692">
    <property type="term" value="C:Noc4p-Nop14p complex"/>
    <property type="evidence" value="ECO:0007669"/>
    <property type="project" value="TreeGrafter"/>
</dbReference>
<dbReference type="GO" id="GO:0005730">
    <property type="term" value="C:nucleolus"/>
    <property type="evidence" value="ECO:0000250"/>
    <property type="project" value="UniProtKB"/>
</dbReference>
<dbReference type="GO" id="GO:0032040">
    <property type="term" value="C:small-subunit processome"/>
    <property type="evidence" value="ECO:0007669"/>
    <property type="project" value="InterPro"/>
</dbReference>
<dbReference type="GO" id="GO:0030515">
    <property type="term" value="F:snoRNA binding"/>
    <property type="evidence" value="ECO:0000250"/>
    <property type="project" value="UniProtKB"/>
</dbReference>
<dbReference type="GO" id="GO:0030490">
    <property type="term" value="P:maturation of SSU-rRNA"/>
    <property type="evidence" value="ECO:0007669"/>
    <property type="project" value="TreeGrafter"/>
</dbReference>
<dbReference type="GO" id="GO:0042274">
    <property type="term" value="P:ribosomal small subunit biogenesis"/>
    <property type="evidence" value="ECO:0000250"/>
    <property type="project" value="UniProtKB"/>
</dbReference>
<dbReference type="InterPro" id="IPR007276">
    <property type="entry name" value="Nop14"/>
</dbReference>
<dbReference type="PANTHER" id="PTHR23183">
    <property type="entry name" value="NOP14"/>
    <property type="match status" value="1"/>
</dbReference>
<dbReference type="PANTHER" id="PTHR23183:SF0">
    <property type="entry name" value="NUCLEOLAR PROTEIN 14"/>
    <property type="match status" value="1"/>
</dbReference>
<dbReference type="Pfam" id="PF04147">
    <property type="entry name" value="Nop14"/>
    <property type="match status" value="2"/>
</dbReference>
<feature type="chain" id="PRO_0000137160" description="Probable nucleolar complex protein 14">
    <location>
        <begin position="1"/>
        <end position="837"/>
    </location>
</feature>
<feature type="region of interest" description="Disordered" evidence="2">
    <location>
        <begin position="1"/>
        <end position="45"/>
    </location>
</feature>
<feature type="region of interest" description="Disordered" evidence="2">
    <location>
        <begin position="131"/>
        <end position="162"/>
    </location>
</feature>
<feature type="region of interest" description="Disordered" evidence="2">
    <location>
        <begin position="204"/>
        <end position="228"/>
    </location>
</feature>
<feature type="region of interest" description="Disordered" evidence="2">
    <location>
        <begin position="373"/>
        <end position="406"/>
    </location>
</feature>
<feature type="region of interest" description="Disordered" evidence="2">
    <location>
        <begin position="738"/>
        <end position="761"/>
    </location>
</feature>
<feature type="region of interest" description="Disordered" evidence="2">
    <location>
        <begin position="815"/>
        <end position="837"/>
    </location>
</feature>
<feature type="compositionally biased region" description="Basic and acidic residues" evidence="2">
    <location>
        <begin position="34"/>
        <end position="45"/>
    </location>
</feature>
<feature type="compositionally biased region" description="Acidic residues" evidence="2">
    <location>
        <begin position="150"/>
        <end position="160"/>
    </location>
</feature>
<feature type="compositionally biased region" description="Acidic residues" evidence="2">
    <location>
        <begin position="207"/>
        <end position="217"/>
    </location>
</feature>
<feature type="compositionally biased region" description="Acidic residues" evidence="2">
    <location>
        <begin position="377"/>
        <end position="394"/>
    </location>
</feature>
<feature type="compositionally biased region" description="Basic and acidic residues" evidence="2">
    <location>
        <begin position="743"/>
        <end position="761"/>
    </location>
</feature>
<feature type="compositionally biased region" description="Basic and acidic residues" evidence="2">
    <location>
        <begin position="820"/>
        <end position="837"/>
    </location>
</feature>
<proteinExistence type="inferred from homology"/>
<gene>
    <name type="primary">NOP14</name>
    <name type="ordered locus">KLLA0C16335g</name>
</gene>
<organism>
    <name type="scientific">Kluyveromyces lactis (strain ATCC 8585 / CBS 2359 / DSM 70799 / NBRC 1267 / NRRL Y-1140 / WM37)</name>
    <name type="common">Yeast</name>
    <name type="synonym">Candida sphaerica</name>
    <dbReference type="NCBI Taxonomy" id="284590"/>
    <lineage>
        <taxon>Eukaryota</taxon>
        <taxon>Fungi</taxon>
        <taxon>Dikarya</taxon>
        <taxon>Ascomycota</taxon>
        <taxon>Saccharomycotina</taxon>
        <taxon>Saccharomycetes</taxon>
        <taxon>Saccharomycetales</taxon>
        <taxon>Saccharomycetaceae</taxon>
        <taxon>Kluyveromyces</taxon>
    </lineage>
</organism>
<evidence type="ECO:0000250" key="1"/>
<evidence type="ECO:0000256" key="2">
    <source>
        <dbReference type="SAM" id="MobiDB-lite"/>
    </source>
</evidence>
<evidence type="ECO:0000305" key="3"/>
<comment type="function">
    <text evidence="1">Involved in nucleolar processing of pre-18S ribosomal RNA. Has a role in the nuclear export of 40S pre-ribosomal subunit to the cytoplasm (By similarity).</text>
</comment>
<comment type="subunit">
    <text evidence="1">Component of the ribosomal small subunit (SSU) processome.</text>
</comment>
<comment type="subcellular location">
    <subcellularLocation>
        <location evidence="1">Nucleus</location>
        <location evidence="1">Nucleolus</location>
    </subcellularLocation>
</comment>
<comment type="similarity">
    <text evidence="3">Belongs to the NOP14 family.</text>
</comment>
<reference key="1">
    <citation type="journal article" date="2004" name="Nature">
        <title>Genome evolution in yeasts.</title>
        <authorList>
            <person name="Dujon B."/>
            <person name="Sherman D."/>
            <person name="Fischer G."/>
            <person name="Durrens P."/>
            <person name="Casaregola S."/>
            <person name="Lafontaine I."/>
            <person name="de Montigny J."/>
            <person name="Marck C."/>
            <person name="Neuveglise C."/>
            <person name="Talla E."/>
            <person name="Goffard N."/>
            <person name="Frangeul L."/>
            <person name="Aigle M."/>
            <person name="Anthouard V."/>
            <person name="Babour A."/>
            <person name="Barbe V."/>
            <person name="Barnay S."/>
            <person name="Blanchin S."/>
            <person name="Beckerich J.-M."/>
            <person name="Beyne E."/>
            <person name="Bleykasten C."/>
            <person name="Boisrame A."/>
            <person name="Boyer J."/>
            <person name="Cattolico L."/>
            <person name="Confanioleri F."/>
            <person name="de Daruvar A."/>
            <person name="Despons L."/>
            <person name="Fabre E."/>
            <person name="Fairhead C."/>
            <person name="Ferry-Dumazet H."/>
            <person name="Groppi A."/>
            <person name="Hantraye F."/>
            <person name="Hennequin C."/>
            <person name="Jauniaux N."/>
            <person name="Joyet P."/>
            <person name="Kachouri R."/>
            <person name="Kerrest A."/>
            <person name="Koszul R."/>
            <person name="Lemaire M."/>
            <person name="Lesur I."/>
            <person name="Ma L."/>
            <person name="Muller H."/>
            <person name="Nicaud J.-M."/>
            <person name="Nikolski M."/>
            <person name="Oztas S."/>
            <person name="Ozier-Kalogeropoulos O."/>
            <person name="Pellenz S."/>
            <person name="Potier S."/>
            <person name="Richard G.-F."/>
            <person name="Straub M.-L."/>
            <person name="Suleau A."/>
            <person name="Swennen D."/>
            <person name="Tekaia F."/>
            <person name="Wesolowski-Louvel M."/>
            <person name="Westhof E."/>
            <person name="Wirth B."/>
            <person name="Zeniou-Meyer M."/>
            <person name="Zivanovic Y."/>
            <person name="Bolotin-Fukuhara M."/>
            <person name="Thierry A."/>
            <person name="Bouchier C."/>
            <person name="Caudron B."/>
            <person name="Scarpelli C."/>
            <person name="Gaillardin C."/>
            <person name="Weissenbach J."/>
            <person name="Wincker P."/>
            <person name="Souciet J.-L."/>
        </authorList>
    </citation>
    <scope>NUCLEOTIDE SEQUENCE [LARGE SCALE GENOMIC DNA]</scope>
    <source>
        <strain>ATCC 8585 / CBS 2359 / DSM 70799 / NBRC 1267 / NRRL Y-1140 / WM37</strain>
    </source>
</reference>
<name>NOP14_KLULA</name>
<accession>Q6CT09</accession>